<keyword id="KW-0413">Isomerase</keyword>
<keyword id="KW-1185">Reference proteome</keyword>
<accession>Q8Y8D3</accession>
<protein>
    <recommendedName>
        <fullName evidence="1">Ribose-5-phosphate isomerase A</fullName>
        <ecNumber evidence="1">5.3.1.6</ecNumber>
    </recommendedName>
    <alternativeName>
        <fullName evidence="1">Phosphoriboisomerase A</fullName>
        <shortName evidence="1">PRI</shortName>
    </alternativeName>
</protein>
<name>RPIA_LISMO</name>
<gene>
    <name evidence="1" type="primary">rpiA</name>
    <name type="ordered locus">lmo0975</name>
</gene>
<comment type="function">
    <text evidence="1">Catalyzes the reversible conversion of ribose-5-phosphate to ribulose 5-phosphate.</text>
</comment>
<comment type="catalytic activity">
    <reaction evidence="1">
        <text>aldehydo-D-ribose 5-phosphate = D-ribulose 5-phosphate</text>
        <dbReference type="Rhea" id="RHEA:14657"/>
        <dbReference type="ChEBI" id="CHEBI:58121"/>
        <dbReference type="ChEBI" id="CHEBI:58273"/>
        <dbReference type="EC" id="5.3.1.6"/>
    </reaction>
</comment>
<comment type="pathway">
    <text evidence="1">Carbohydrate degradation; pentose phosphate pathway; D-ribose 5-phosphate from D-ribulose 5-phosphate (non-oxidative stage): step 1/1.</text>
</comment>
<comment type="subunit">
    <text evidence="1">Homodimer.</text>
</comment>
<comment type="similarity">
    <text evidence="1">Belongs to the ribose 5-phosphate isomerase family.</text>
</comment>
<evidence type="ECO:0000255" key="1">
    <source>
        <dbReference type="HAMAP-Rule" id="MF_00170"/>
    </source>
</evidence>
<reference key="1">
    <citation type="journal article" date="2001" name="Science">
        <title>Comparative genomics of Listeria species.</title>
        <authorList>
            <person name="Glaser P."/>
            <person name="Frangeul L."/>
            <person name="Buchrieser C."/>
            <person name="Rusniok C."/>
            <person name="Amend A."/>
            <person name="Baquero F."/>
            <person name="Berche P."/>
            <person name="Bloecker H."/>
            <person name="Brandt P."/>
            <person name="Chakraborty T."/>
            <person name="Charbit A."/>
            <person name="Chetouani F."/>
            <person name="Couve E."/>
            <person name="de Daruvar A."/>
            <person name="Dehoux P."/>
            <person name="Domann E."/>
            <person name="Dominguez-Bernal G."/>
            <person name="Duchaud E."/>
            <person name="Durant L."/>
            <person name="Dussurget O."/>
            <person name="Entian K.-D."/>
            <person name="Fsihi H."/>
            <person name="Garcia-del Portillo F."/>
            <person name="Garrido P."/>
            <person name="Gautier L."/>
            <person name="Goebel W."/>
            <person name="Gomez-Lopez N."/>
            <person name="Hain T."/>
            <person name="Hauf J."/>
            <person name="Jackson D."/>
            <person name="Jones L.-M."/>
            <person name="Kaerst U."/>
            <person name="Kreft J."/>
            <person name="Kuhn M."/>
            <person name="Kunst F."/>
            <person name="Kurapkat G."/>
            <person name="Madueno E."/>
            <person name="Maitournam A."/>
            <person name="Mata Vicente J."/>
            <person name="Ng E."/>
            <person name="Nedjari H."/>
            <person name="Nordsiek G."/>
            <person name="Novella S."/>
            <person name="de Pablos B."/>
            <person name="Perez-Diaz J.-C."/>
            <person name="Purcell R."/>
            <person name="Remmel B."/>
            <person name="Rose M."/>
            <person name="Schlueter T."/>
            <person name="Simoes N."/>
            <person name="Tierrez A."/>
            <person name="Vazquez-Boland J.-A."/>
            <person name="Voss H."/>
            <person name="Wehland J."/>
            <person name="Cossart P."/>
        </authorList>
    </citation>
    <scope>NUCLEOTIDE SEQUENCE [LARGE SCALE GENOMIC DNA]</scope>
    <source>
        <strain>ATCC BAA-679 / EGD-e</strain>
    </source>
</reference>
<dbReference type="EC" id="5.3.1.6" evidence="1"/>
<dbReference type="EMBL" id="AL591977">
    <property type="protein sequence ID" value="CAC99053.1"/>
    <property type="molecule type" value="Genomic_DNA"/>
</dbReference>
<dbReference type="PIR" id="AG1196">
    <property type="entry name" value="AG1196"/>
</dbReference>
<dbReference type="RefSeq" id="NP_464500.1">
    <property type="nucleotide sequence ID" value="NC_003210.1"/>
</dbReference>
<dbReference type="RefSeq" id="WP_003722798.1">
    <property type="nucleotide sequence ID" value="NZ_CP149495.1"/>
</dbReference>
<dbReference type="SMR" id="Q8Y8D3"/>
<dbReference type="STRING" id="169963.gene:17593631"/>
<dbReference type="PaxDb" id="169963-lmo0975"/>
<dbReference type="EnsemblBacteria" id="CAC99053">
    <property type="protein sequence ID" value="CAC99053"/>
    <property type="gene ID" value="CAC99053"/>
</dbReference>
<dbReference type="GeneID" id="986443"/>
<dbReference type="KEGG" id="lmo:lmo0975"/>
<dbReference type="PATRIC" id="fig|169963.11.peg.1003"/>
<dbReference type="eggNOG" id="COG0120">
    <property type="taxonomic scope" value="Bacteria"/>
</dbReference>
<dbReference type="HOGENOM" id="CLU_056590_1_0_9"/>
<dbReference type="OrthoDB" id="5870696at2"/>
<dbReference type="PhylomeDB" id="Q8Y8D3"/>
<dbReference type="BioCyc" id="LMON169963:LMO0975-MONOMER"/>
<dbReference type="UniPathway" id="UPA00115">
    <property type="reaction ID" value="UER00412"/>
</dbReference>
<dbReference type="Proteomes" id="UP000000817">
    <property type="component" value="Chromosome"/>
</dbReference>
<dbReference type="GO" id="GO:0004751">
    <property type="term" value="F:ribose-5-phosphate isomerase activity"/>
    <property type="evidence" value="ECO:0007669"/>
    <property type="project" value="UniProtKB-UniRule"/>
</dbReference>
<dbReference type="GO" id="GO:0009052">
    <property type="term" value="P:pentose-phosphate shunt, non-oxidative branch"/>
    <property type="evidence" value="ECO:0007669"/>
    <property type="project" value="UniProtKB-UniRule"/>
</dbReference>
<dbReference type="CDD" id="cd01398">
    <property type="entry name" value="RPI_A"/>
    <property type="match status" value="1"/>
</dbReference>
<dbReference type="FunFam" id="3.40.50.1360:FF:000001">
    <property type="entry name" value="Ribose-5-phosphate isomerase A"/>
    <property type="match status" value="1"/>
</dbReference>
<dbReference type="Gene3D" id="3.30.70.260">
    <property type="match status" value="1"/>
</dbReference>
<dbReference type="Gene3D" id="3.40.50.1360">
    <property type="match status" value="1"/>
</dbReference>
<dbReference type="HAMAP" id="MF_00170">
    <property type="entry name" value="Rib_5P_isom_A"/>
    <property type="match status" value="1"/>
</dbReference>
<dbReference type="InterPro" id="IPR037171">
    <property type="entry name" value="NagB/RpiA_transferase-like"/>
</dbReference>
<dbReference type="InterPro" id="IPR050262">
    <property type="entry name" value="Ribose-5P_isomerase"/>
</dbReference>
<dbReference type="InterPro" id="IPR020672">
    <property type="entry name" value="Ribose5P_isomerase_typA_subgr"/>
</dbReference>
<dbReference type="InterPro" id="IPR004788">
    <property type="entry name" value="Ribose5P_isomerase_type_A"/>
</dbReference>
<dbReference type="NCBIfam" id="NF001924">
    <property type="entry name" value="PRK00702.1"/>
    <property type="match status" value="1"/>
</dbReference>
<dbReference type="NCBIfam" id="TIGR00021">
    <property type="entry name" value="rpiA"/>
    <property type="match status" value="1"/>
</dbReference>
<dbReference type="PANTHER" id="PTHR43748">
    <property type="entry name" value="RIBOSE-5-PHOSPHATE ISOMERASE 3, CHLOROPLASTIC-RELATED"/>
    <property type="match status" value="1"/>
</dbReference>
<dbReference type="PANTHER" id="PTHR43748:SF3">
    <property type="entry name" value="RIBOSE-5-PHOSPHATE ISOMERASE 3, CHLOROPLASTIC-RELATED"/>
    <property type="match status" value="1"/>
</dbReference>
<dbReference type="Pfam" id="PF06026">
    <property type="entry name" value="Rib_5-P_isom_A"/>
    <property type="match status" value="1"/>
</dbReference>
<dbReference type="SUPFAM" id="SSF75445">
    <property type="entry name" value="D-ribose-5-phosphate isomerase (RpiA), lid domain"/>
    <property type="match status" value="1"/>
</dbReference>
<dbReference type="SUPFAM" id="SSF100950">
    <property type="entry name" value="NagB/RpiA/CoA transferase-like"/>
    <property type="match status" value="1"/>
</dbReference>
<sequence>MINQKKIAGEKACEWIKDGMVVGLGTGSTVYYTIEKLGEMVNNGLHITGVATSEETNKQAQNLGIPLKSLNDVTEIDITIDGADEIDTDFQGIKGGGGALLREKMVASASLKNIWVVSEEKLVRNLGKFPLPLEVIPFGWKQVERKLEKEHIQTNLRKQSSGEVYVTNNGNYILDIVNQTFTDAEMWQEKLAQIPGIVEHGLFLHYVDIIICAKANGEIELIKK</sequence>
<proteinExistence type="inferred from homology"/>
<feature type="chain" id="PRO_0000158434" description="Ribose-5-phosphate isomerase A">
    <location>
        <begin position="1"/>
        <end position="224"/>
    </location>
</feature>
<feature type="active site" description="Proton acceptor" evidence="1">
    <location>
        <position position="103"/>
    </location>
</feature>
<feature type="binding site" evidence="1">
    <location>
        <begin position="26"/>
        <end position="29"/>
    </location>
    <ligand>
        <name>substrate</name>
    </ligand>
</feature>
<feature type="binding site" evidence="1">
    <location>
        <begin position="81"/>
        <end position="84"/>
    </location>
    <ligand>
        <name>substrate</name>
    </ligand>
</feature>
<feature type="binding site" evidence="1">
    <location>
        <begin position="94"/>
        <end position="97"/>
    </location>
    <ligand>
        <name>substrate</name>
    </ligand>
</feature>
<feature type="binding site" evidence="1">
    <location>
        <position position="121"/>
    </location>
    <ligand>
        <name>substrate</name>
    </ligand>
</feature>
<organism>
    <name type="scientific">Listeria monocytogenes serovar 1/2a (strain ATCC BAA-679 / EGD-e)</name>
    <dbReference type="NCBI Taxonomy" id="169963"/>
    <lineage>
        <taxon>Bacteria</taxon>
        <taxon>Bacillati</taxon>
        <taxon>Bacillota</taxon>
        <taxon>Bacilli</taxon>
        <taxon>Bacillales</taxon>
        <taxon>Listeriaceae</taxon>
        <taxon>Listeria</taxon>
    </lineage>
</organism>